<keyword id="KW-0539">Nucleus</keyword>
<protein>
    <recommendedName>
        <fullName>Type 1 phosphatases regulator ypi1</fullName>
    </recommendedName>
</protein>
<evidence type="ECO:0000250" key="1"/>
<evidence type="ECO:0000256" key="2">
    <source>
        <dbReference type="SAM" id="MobiDB-lite"/>
    </source>
</evidence>
<evidence type="ECO:0000305" key="3"/>
<gene>
    <name type="primary">ypi1</name>
    <name type="ORF">AFUB_008140</name>
</gene>
<proteinExistence type="inferred from homology"/>
<name>YPI1_ASPFC</name>
<reference key="1">
    <citation type="journal article" date="2008" name="PLoS Genet.">
        <title>Genomic islands in the pathogenic filamentous fungus Aspergillus fumigatus.</title>
        <authorList>
            <person name="Fedorova N.D."/>
            <person name="Khaldi N."/>
            <person name="Joardar V.S."/>
            <person name="Maiti R."/>
            <person name="Amedeo P."/>
            <person name="Anderson M.J."/>
            <person name="Crabtree J."/>
            <person name="Silva J.C."/>
            <person name="Badger J.H."/>
            <person name="Albarraq A."/>
            <person name="Angiuoli S."/>
            <person name="Bussey H."/>
            <person name="Bowyer P."/>
            <person name="Cotty P.J."/>
            <person name="Dyer P.S."/>
            <person name="Egan A."/>
            <person name="Galens K."/>
            <person name="Fraser-Liggett C.M."/>
            <person name="Haas B.J."/>
            <person name="Inman J.M."/>
            <person name="Kent R."/>
            <person name="Lemieux S."/>
            <person name="Malavazi I."/>
            <person name="Orvis J."/>
            <person name="Roemer T."/>
            <person name="Ronning C.M."/>
            <person name="Sundaram J.P."/>
            <person name="Sutton G."/>
            <person name="Turner G."/>
            <person name="Venter J.C."/>
            <person name="White O.R."/>
            <person name="Whitty B.R."/>
            <person name="Youngman P."/>
            <person name="Wolfe K.H."/>
            <person name="Goldman G.H."/>
            <person name="Wortman J.R."/>
            <person name="Jiang B."/>
            <person name="Denning D.W."/>
            <person name="Nierman W.C."/>
        </authorList>
    </citation>
    <scope>NUCLEOTIDE SEQUENCE [LARGE SCALE GENOMIC DNA]</scope>
    <source>
        <strain>CBS 144.89 / FGSC A1163 / CEA10</strain>
    </source>
</reference>
<feature type="chain" id="PRO_0000333467" description="Type 1 phosphatases regulator ypi1">
    <location>
        <begin position="1"/>
        <end position="182"/>
    </location>
</feature>
<feature type="region of interest" description="Disordered" evidence="2">
    <location>
        <begin position="1"/>
        <end position="30"/>
    </location>
</feature>
<feature type="region of interest" description="Disordered" evidence="2">
    <location>
        <begin position="76"/>
        <end position="182"/>
    </location>
</feature>
<feature type="compositionally biased region" description="Polar residues" evidence="2">
    <location>
        <begin position="1"/>
        <end position="18"/>
    </location>
</feature>
<feature type="compositionally biased region" description="Basic and acidic residues" evidence="2">
    <location>
        <begin position="113"/>
        <end position="128"/>
    </location>
</feature>
<feature type="compositionally biased region" description="Polar residues" evidence="2">
    <location>
        <begin position="129"/>
        <end position="149"/>
    </location>
</feature>
<feature type="compositionally biased region" description="Basic residues" evidence="2">
    <location>
        <begin position="150"/>
        <end position="162"/>
    </location>
</feature>
<comment type="function">
    <text evidence="1">Regulator of type 1 phosphatases which maintains protein phosphatase activity under strict control.</text>
</comment>
<comment type="subcellular location">
    <subcellularLocation>
        <location evidence="1">Nucleus</location>
    </subcellularLocation>
</comment>
<comment type="similarity">
    <text evidence="3">Belongs to the YPI1 family.</text>
</comment>
<organism>
    <name type="scientific">Aspergillus fumigatus (strain CBS 144.89 / FGSC A1163 / CEA10)</name>
    <name type="common">Neosartorya fumigata</name>
    <dbReference type="NCBI Taxonomy" id="451804"/>
    <lineage>
        <taxon>Eukaryota</taxon>
        <taxon>Fungi</taxon>
        <taxon>Dikarya</taxon>
        <taxon>Ascomycota</taxon>
        <taxon>Pezizomycotina</taxon>
        <taxon>Eurotiomycetes</taxon>
        <taxon>Eurotiomycetidae</taxon>
        <taxon>Eurotiales</taxon>
        <taxon>Aspergillaceae</taxon>
        <taxon>Aspergillus</taxon>
        <taxon>Aspergillus subgen. Fumigati</taxon>
    </lineage>
</organism>
<accession>B0XPZ9</accession>
<sequence>MSRTRQVPSNTASSSHIQLLSPAVPQENHSTVRISGTLRLRAENDSIATDHIEGARPGRHIRWTEDVVDNEGLGKKSSKVCCIYHKPRPVGESSSESDDSTSSSSEPESDNDVDCRDSTGRAESHEQNAQDASQSPSNRSLNRGRTPSYTKRHAKRNGKRKPSPNAYEKMPKVKGQPRKTGM</sequence>
<dbReference type="EMBL" id="DS499594">
    <property type="protein sequence ID" value="EDP56113.1"/>
    <property type="molecule type" value="Genomic_DNA"/>
</dbReference>
<dbReference type="SMR" id="B0XPZ9"/>
<dbReference type="EnsemblFungi" id="EDP56113">
    <property type="protein sequence ID" value="EDP56113"/>
    <property type="gene ID" value="AFUB_008140"/>
</dbReference>
<dbReference type="VEuPathDB" id="FungiDB:AFUB_008140"/>
<dbReference type="HOGENOM" id="CLU_098333_0_0_1"/>
<dbReference type="OrthoDB" id="124977at5052"/>
<dbReference type="PhylomeDB" id="B0XPZ9"/>
<dbReference type="Proteomes" id="UP000001699">
    <property type="component" value="Unassembled WGS sequence"/>
</dbReference>
<dbReference type="GO" id="GO:0005634">
    <property type="term" value="C:nucleus"/>
    <property type="evidence" value="ECO:0007669"/>
    <property type="project" value="UniProtKB-SubCell"/>
</dbReference>
<dbReference type="GO" id="GO:0008157">
    <property type="term" value="F:protein phosphatase 1 binding"/>
    <property type="evidence" value="ECO:0007669"/>
    <property type="project" value="TreeGrafter"/>
</dbReference>
<dbReference type="GO" id="GO:0004865">
    <property type="term" value="F:protein serine/threonine phosphatase inhibitor activity"/>
    <property type="evidence" value="ECO:0007669"/>
    <property type="project" value="InterPro"/>
</dbReference>
<dbReference type="InterPro" id="IPR011107">
    <property type="entry name" value="PPI_Ypi1"/>
</dbReference>
<dbReference type="PANTHER" id="PTHR20835:SF0">
    <property type="entry name" value="E3 UBIQUITIN-PROTEIN LIGASE PPP1R11"/>
    <property type="match status" value="1"/>
</dbReference>
<dbReference type="PANTHER" id="PTHR20835">
    <property type="entry name" value="E3 UBIQUITIN-PROTEIN LIGASE PPP1R11-RELATED"/>
    <property type="match status" value="1"/>
</dbReference>
<dbReference type="Pfam" id="PF07491">
    <property type="entry name" value="PPI_Ypi1"/>
    <property type="match status" value="1"/>
</dbReference>